<name>FTHS_STAAN</name>
<gene>
    <name evidence="1" type="primary">fhs</name>
    <name type="ordered locus">SA1553</name>
</gene>
<sequence>MTHLSDLDIANQSTLQPIKDIAASVGISEDALEPYGHYKAKIDINKITPRENKGKVVLVTAMSPTPAGEGKSTVTVGLADAFHELNKNVMVALREPALGPTFGIKGGATGGGYAQVLPMEDINLHFNGDFHAITTANNALSAFIDNHIHQGNELGIDQRRIEWKRVLDMNDRALRHVNVGLGGPTNGVPREDGFNITVASEIMAILCLSRSIKDLKDKISRITIGYTRDRKPVTVADLKVQGALAMILKDAIKPNLVQSIEGTPALVHGGPFANIAHGCNSILATETARDLADIVVTEAGFGSDLGAEKFMDIKAREAGFDLAAVVVVATIRALKMHGGVAKDNLKEENVEAVKAGIVNLERHVNNIKKFGVEPVVAINAFIHDTDAEVEYVKSWAKENNVRIALTEVWEKGGKGGVDLANEVLEVIDQPNSFKPLYELELPLEQKIEKIVTEIYGGSKVTFSSKAQKQLKQFKENGWDNYPVCMAKTQYSFSDDQTLLGAPSGFEITIRELEAKTGAGFIVALTGAIMTMPGLPKKPAALNMDVTDDGHAIGLF</sequence>
<proteinExistence type="evidence at protein level"/>
<feature type="chain" id="PRO_0000199380" description="Formate--tetrahydrofolate ligase">
    <location>
        <begin position="1"/>
        <end position="555"/>
    </location>
</feature>
<feature type="binding site" evidence="1">
    <location>
        <begin position="65"/>
        <end position="72"/>
    </location>
    <ligand>
        <name>ATP</name>
        <dbReference type="ChEBI" id="CHEBI:30616"/>
    </ligand>
</feature>
<keyword id="KW-0067">ATP-binding</keyword>
<keyword id="KW-0436">Ligase</keyword>
<keyword id="KW-0547">Nucleotide-binding</keyword>
<keyword id="KW-0554">One-carbon metabolism</keyword>
<dbReference type="EC" id="6.3.4.3" evidence="1"/>
<dbReference type="EMBL" id="BA000018">
    <property type="protein sequence ID" value="BAB42821.1"/>
    <property type="molecule type" value="Genomic_DNA"/>
</dbReference>
<dbReference type="PIR" id="H89957">
    <property type="entry name" value="H89957"/>
</dbReference>
<dbReference type="RefSeq" id="WP_000149407.1">
    <property type="nucleotide sequence ID" value="NC_002745.2"/>
</dbReference>
<dbReference type="SMR" id="Q7A535"/>
<dbReference type="EnsemblBacteria" id="BAB42821">
    <property type="protein sequence ID" value="BAB42821"/>
    <property type="gene ID" value="BAB42821"/>
</dbReference>
<dbReference type="KEGG" id="sau:SA1553"/>
<dbReference type="HOGENOM" id="CLU_003601_3_3_9"/>
<dbReference type="UniPathway" id="UPA00193"/>
<dbReference type="GO" id="GO:0005524">
    <property type="term" value="F:ATP binding"/>
    <property type="evidence" value="ECO:0007669"/>
    <property type="project" value="UniProtKB-UniRule"/>
</dbReference>
<dbReference type="GO" id="GO:0004329">
    <property type="term" value="F:formate-tetrahydrofolate ligase activity"/>
    <property type="evidence" value="ECO:0007669"/>
    <property type="project" value="UniProtKB-UniRule"/>
</dbReference>
<dbReference type="GO" id="GO:0035999">
    <property type="term" value="P:tetrahydrofolate interconversion"/>
    <property type="evidence" value="ECO:0007669"/>
    <property type="project" value="UniProtKB-UniRule"/>
</dbReference>
<dbReference type="CDD" id="cd00477">
    <property type="entry name" value="FTHFS"/>
    <property type="match status" value="1"/>
</dbReference>
<dbReference type="FunFam" id="3.30.1510.10:FF:000001">
    <property type="entry name" value="Formate--tetrahydrofolate ligase"/>
    <property type="match status" value="1"/>
</dbReference>
<dbReference type="FunFam" id="3.10.410.10:FF:000001">
    <property type="entry name" value="Putative formate--tetrahydrofolate ligase"/>
    <property type="match status" value="1"/>
</dbReference>
<dbReference type="Gene3D" id="3.30.1510.10">
    <property type="entry name" value="Domain 2, N(10)-formyltetrahydrofolate synthetase"/>
    <property type="match status" value="1"/>
</dbReference>
<dbReference type="Gene3D" id="3.10.410.10">
    <property type="entry name" value="Formyltetrahydrofolate synthetase, domain 3"/>
    <property type="match status" value="1"/>
</dbReference>
<dbReference type="Gene3D" id="3.40.50.300">
    <property type="entry name" value="P-loop containing nucleotide triphosphate hydrolases"/>
    <property type="match status" value="1"/>
</dbReference>
<dbReference type="HAMAP" id="MF_01543">
    <property type="entry name" value="FTHFS"/>
    <property type="match status" value="1"/>
</dbReference>
<dbReference type="InterPro" id="IPR000559">
    <property type="entry name" value="Formate_THF_ligase"/>
</dbReference>
<dbReference type="InterPro" id="IPR020628">
    <property type="entry name" value="Formate_THF_ligase_CS"/>
</dbReference>
<dbReference type="InterPro" id="IPR027417">
    <property type="entry name" value="P-loop_NTPase"/>
</dbReference>
<dbReference type="NCBIfam" id="NF010030">
    <property type="entry name" value="PRK13505.1"/>
    <property type="match status" value="1"/>
</dbReference>
<dbReference type="Pfam" id="PF01268">
    <property type="entry name" value="FTHFS"/>
    <property type="match status" value="1"/>
</dbReference>
<dbReference type="SUPFAM" id="SSF52540">
    <property type="entry name" value="P-loop containing nucleoside triphosphate hydrolases"/>
    <property type="match status" value="1"/>
</dbReference>
<dbReference type="PROSITE" id="PS00721">
    <property type="entry name" value="FTHFS_1"/>
    <property type="match status" value="1"/>
</dbReference>
<dbReference type="PROSITE" id="PS00722">
    <property type="entry name" value="FTHFS_2"/>
    <property type="match status" value="1"/>
</dbReference>
<reference key="1">
    <citation type="journal article" date="2001" name="Lancet">
        <title>Whole genome sequencing of meticillin-resistant Staphylococcus aureus.</title>
        <authorList>
            <person name="Kuroda M."/>
            <person name="Ohta T."/>
            <person name="Uchiyama I."/>
            <person name="Baba T."/>
            <person name="Yuzawa H."/>
            <person name="Kobayashi I."/>
            <person name="Cui L."/>
            <person name="Oguchi A."/>
            <person name="Aoki K."/>
            <person name="Nagai Y."/>
            <person name="Lian J.-Q."/>
            <person name="Ito T."/>
            <person name="Kanamori M."/>
            <person name="Matsumaru H."/>
            <person name="Maruyama A."/>
            <person name="Murakami H."/>
            <person name="Hosoyama A."/>
            <person name="Mizutani-Ui Y."/>
            <person name="Takahashi N.K."/>
            <person name="Sawano T."/>
            <person name="Inoue R."/>
            <person name="Kaito C."/>
            <person name="Sekimizu K."/>
            <person name="Hirakawa H."/>
            <person name="Kuhara S."/>
            <person name="Goto S."/>
            <person name="Yabuzaki J."/>
            <person name="Kanehisa M."/>
            <person name="Yamashita A."/>
            <person name="Oshima K."/>
            <person name="Furuya K."/>
            <person name="Yoshino C."/>
            <person name="Shiba T."/>
            <person name="Hattori M."/>
            <person name="Ogasawara N."/>
            <person name="Hayashi H."/>
            <person name="Hiramatsu K."/>
        </authorList>
    </citation>
    <scope>NUCLEOTIDE SEQUENCE [LARGE SCALE GENOMIC DNA]</scope>
    <source>
        <strain>N315</strain>
    </source>
</reference>
<reference key="2">
    <citation type="journal article" date="2005" name="J. Microbiol. Methods">
        <title>Correlation of proteomic and transcriptomic profiles of Staphylococcus aureus during the post-exponential phase of growth.</title>
        <authorList>
            <person name="Scherl A."/>
            <person name="Francois P."/>
            <person name="Bento M."/>
            <person name="Deshusses J.M."/>
            <person name="Charbonnier Y."/>
            <person name="Converset V."/>
            <person name="Huyghe A."/>
            <person name="Walter N."/>
            <person name="Hoogland C."/>
            <person name="Appel R.D."/>
            <person name="Sanchez J.-C."/>
            <person name="Zimmermann-Ivol C.G."/>
            <person name="Corthals G.L."/>
            <person name="Hochstrasser D.F."/>
            <person name="Schrenzel J."/>
        </authorList>
    </citation>
    <scope>IDENTIFICATION BY MASS SPECTROMETRY</scope>
    <source>
        <strain>N315</strain>
    </source>
</reference>
<reference key="3">
    <citation type="submission" date="2007-10" db="UniProtKB">
        <title>Shotgun proteomic analysis of total and membrane protein extracts of S. aureus strain N315.</title>
        <authorList>
            <person name="Vaezzadeh A.R."/>
            <person name="Deshusses J."/>
            <person name="Lescuyer P."/>
            <person name="Hochstrasser D.F."/>
        </authorList>
    </citation>
    <scope>IDENTIFICATION BY MASS SPECTROMETRY [LARGE SCALE ANALYSIS]</scope>
    <source>
        <strain>N315</strain>
    </source>
</reference>
<evidence type="ECO:0000255" key="1">
    <source>
        <dbReference type="HAMAP-Rule" id="MF_01543"/>
    </source>
</evidence>
<comment type="catalytic activity">
    <reaction evidence="1">
        <text>(6S)-5,6,7,8-tetrahydrofolate + formate + ATP = (6R)-10-formyltetrahydrofolate + ADP + phosphate</text>
        <dbReference type="Rhea" id="RHEA:20221"/>
        <dbReference type="ChEBI" id="CHEBI:15740"/>
        <dbReference type="ChEBI" id="CHEBI:30616"/>
        <dbReference type="ChEBI" id="CHEBI:43474"/>
        <dbReference type="ChEBI" id="CHEBI:57453"/>
        <dbReference type="ChEBI" id="CHEBI:195366"/>
        <dbReference type="ChEBI" id="CHEBI:456216"/>
        <dbReference type="EC" id="6.3.4.3"/>
    </reaction>
</comment>
<comment type="pathway">
    <text evidence="1">One-carbon metabolism; tetrahydrofolate interconversion.</text>
</comment>
<comment type="similarity">
    <text evidence="1">Belongs to the formate--tetrahydrofolate ligase family.</text>
</comment>
<organism>
    <name type="scientific">Staphylococcus aureus (strain N315)</name>
    <dbReference type="NCBI Taxonomy" id="158879"/>
    <lineage>
        <taxon>Bacteria</taxon>
        <taxon>Bacillati</taxon>
        <taxon>Bacillota</taxon>
        <taxon>Bacilli</taxon>
        <taxon>Bacillales</taxon>
        <taxon>Staphylococcaceae</taxon>
        <taxon>Staphylococcus</taxon>
    </lineage>
</organism>
<accession>Q7A535</accession>
<protein>
    <recommendedName>
        <fullName evidence="1">Formate--tetrahydrofolate ligase</fullName>
        <ecNumber evidence="1">6.3.4.3</ecNumber>
    </recommendedName>
    <alternativeName>
        <fullName evidence="1">Formyltetrahydrofolate synthetase</fullName>
        <shortName evidence="1">FHS</shortName>
        <shortName evidence="1">FTHFS</shortName>
    </alternativeName>
</protein>